<reference key="1">
    <citation type="journal article" date="2009" name="BMC Microbiol.">
        <title>The genome sequence of Geobacter metallireducens: features of metabolism, physiology and regulation common and dissimilar to Geobacter sulfurreducens.</title>
        <authorList>
            <person name="Aklujkar M."/>
            <person name="Krushkal J."/>
            <person name="DiBartolo G."/>
            <person name="Lapidus A."/>
            <person name="Land M.L."/>
            <person name="Lovley D.R."/>
        </authorList>
    </citation>
    <scope>NUCLEOTIDE SEQUENCE [LARGE SCALE GENOMIC DNA]</scope>
    <source>
        <strain>ATCC 53774 / DSM 7210 / GS-15</strain>
    </source>
</reference>
<gene>
    <name evidence="1" type="primary">rplU</name>
    <name type="ordered locus">Gmet_3195</name>
</gene>
<evidence type="ECO:0000255" key="1">
    <source>
        <dbReference type="HAMAP-Rule" id="MF_01363"/>
    </source>
</evidence>
<evidence type="ECO:0000305" key="2"/>
<accession>Q39QR6</accession>
<organism>
    <name type="scientific">Geobacter metallireducens (strain ATCC 53774 / DSM 7210 / GS-15)</name>
    <dbReference type="NCBI Taxonomy" id="269799"/>
    <lineage>
        <taxon>Bacteria</taxon>
        <taxon>Pseudomonadati</taxon>
        <taxon>Thermodesulfobacteriota</taxon>
        <taxon>Desulfuromonadia</taxon>
        <taxon>Geobacterales</taxon>
        <taxon>Geobacteraceae</taxon>
        <taxon>Geobacter</taxon>
    </lineage>
</organism>
<protein>
    <recommendedName>
        <fullName evidence="1">Large ribosomal subunit protein bL21</fullName>
    </recommendedName>
    <alternativeName>
        <fullName evidence="2">50S ribosomal protein L21</fullName>
    </alternativeName>
</protein>
<sequence>MYAVVRTGGKQYKVSEGDFLKVEKLEGAVGDTIELKDILMVGGETVKIGTPLVPSASVVGKIVEQGKDKKILVFKSKKRKDSKKLRGHRQPRTVLKIEKING</sequence>
<dbReference type="EMBL" id="CP000148">
    <property type="protein sequence ID" value="ABB33408.1"/>
    <property type="molecule type" value="Genomic_DNA"/>
</dbReference>
<dbReference type="RefSeq" id="WP_004512633.1">
    <property type="nucleotide sequence ID" value="NC_007517.1"/>
</dbReference>
<dbReference type="SMR" id="Q39QR6"/>
<dbReference type="STRING" id="269799.Gmet_3195"/>
<dbReference type="KEGG" id="gme:Gmet_3195"/>
<dbReference type="eggNOG" id="COG0261">
    <property type="taxonomic scope" value="Bacteria"/>
</dbReference>
<dbReference type="HOGENOM" id="CLU_061463_3_2_7"/>
<dbReference type="Proteomes" id="UP000007073">
    <property type="component" value="Chromosome"/>
</dbReference>
<dbReference type="GO" id="GO:0005737">
    <property type="term" value="C:cytoplasm"/>
    <property type="evidence" value="ECO:0007669"/>
    <property type="project" value="UniProtKB-ARBA"/>
</dbReference>
<dbReference type="GO" id="GO:1990904">
    <property type="term" value="C:ribonucleoprotein complex"/>
    <property type="evidence" value="ECO:0007669"/>
    <property type="project" value="UniProtKB-KW"/>
</dbReference>
<dbReference type="GO" id="GO:0005840">
    <property type="term" value="C:ribosome"/>
    <property type="evidence" value="ECO:0007669"/>
    <property type="project" value="UniProtKB-KW"/>
</dbReference>
<dbReference type="GO" id="GO:0019843">
    <property type="term" value="F:rRNA binding"/>
    <property type="evidence" value="ECO:0007669"/>
    <property type="project" value="UniProtKB-UniRule"/>
</dbReference>
<dbReference type="GO" id="GO:0003735">
    <property type="term" value="F:structural constituent of ribosome"/>
    <property type="evidence" value="ECO:0007669"/>
    <property type="project" value="InterPro"/>
</dbReference>
<dbReference type="GO" id="GO:0006412">
    <property type="term" value="P:translation"/>
    <property type="evidence" value="ECO:0007669"/>
    <property type="project" value="UniProtKB-UniRule"/>
</dbReference>
<dbReference type="HAMAP" id="MF_01363">
    <property type="entry name" value="Ribosomal_bL21"/>
    <property type="match status" value="1"/>
</dbReference>
<dbReference type="InterPro" id="IPR028909">
    <property type="entry name" value="bL21-like"/>
</dbReference>
<dbReference type="InterPro" id="IPR036164">
    <property type="entry name" value="bL21-like_sf"/>
</dbReference>
<dbReference type="InterPro" id="IPR001787">
    <property type="entry name" value="Ribosomal_bL21"/>
</dbReference>
<dbReference type="InterPro" id="IPR018258">
    <property type="entry name" value="Ribosomal_bL21_CS"/>
</dbReference>
<dbReference type="NCBIfam" id="TIGR00061">
    <property type="entry name" value="L21"/>
    <property type="match status" value="1"/>
</dbReference>
<dbReference type="PANTHER" id="PTHR21349">
    <property type="entry name" value="50S RIBOSOMAL PROTEIN L21"/>
    <property type="match status" value="1"/>
</dbReference>
<dbReference type="PANTHER" id="PTHR21349:SF0">
    <property type="entry name" value="LARGE RIBOSOMAL SUBUNIT PROTEIN BL21M"/>
    <property type="match status" value="1"/>
</dbReference>
<dbReference type="Pfam" id="PF00829">
    <property type="entry name" value="Ribosomal_L21p"/>
    <property type="match status" value="1"/>
</dbReference>
<dbReference type="SUPFAM" id="SSF141091">
    <property type="entry name" value="L21p-like"/>
    <property type="match status" value="1"/>
</dbReference>
<dbReference type="PROSITE" id="PS01169">
    <property type="entry name" value="RIBOSOMAL_L21"/>
    <property type="match status" value="1"/>
</dbReference>
<keyword id="KW-1185">Reference proteome</keyword>
<keyword id="KW-0687">Ribonucleoprotein</keyword>
<keyword id="KW-0689">Ribosomal protein</keyword>
<keyword id="KW-0694">RNA-binding</keyword>
<keyword id="KW-0699">rRNA-binding</keyword>
<comment type="function">
    <text evidence="1">This protein binds to 23S rRNA in the presence of protein L20.</text>
</comment>
<comment type="subunit">
    <text evidence="1">Part of the 50S ribosomal subunit. Contacts protein L20.</text>
</comment>
<comment type="similarity">
    <text evidence="1">Belongs to the bacterial ribosomal protein bL21 family.</text>
</comment>
<feature type="chain" id="PRO_0000269321" description="Large ribosomal subunit protein bL21">
    <location>
        <begin position="1"/>
        <end position="102"/>
    </location>
</feature>
<name>RL21_GEOMG</name>
<proteinExistence type="inferred from homology"/>